<keyword id="KW-1003">Cell membrane</keyword>
<keyword id="KW-0165">Cleavage on pair of basic residues</keyword>
<keyword id="KW-0903">Direct protein sequencing</keyword>
<keyword id="KW-1015">Disulfide bond</keyword>
<keyword id="KW-0272">Extracellular matrix</keyword>
<keyword id="KW-0278">Fertilization</keyword>
<keyword id="KW-0325">Glycoprotein</keyword>
<keyword id="KW-0472">Membrane</keyword>
<keyword id="KW-0675">Receptor</keyword>
<keyword id="KW-1185">Reference proteome</keyword>
<keyword id="KW-0964">Secreted</keyword>
<keyword id="KW-0732">Signal</keyword>
<keyword id="KW-0812">Transmembrane</keyword>
<keyword id="KW-1133">Transmembrane helix</keyword>
<sequence length="534" mass="59200">MWLLLQLVWLCFLLSLGLNSWHQSKVPEYPDELRCGLRSFQFTINPLSQETETPPVLVAWDNHGLPHSLQNDSDCGTWVSEGPGSSLVGEASYSGCYVTEWESYYIMTVGIERAGVSGSGAFIETKLFKCPVNLPDVPNAGLCDSVPVWDRLPCAPSPITQGDCKQLGCCYNSEEVISCYYGNTVTSHCTQDGHFSIAVSRNVTSPPLLLNSVHLAFRNDSECKPVMATHTFVLFRFPFTTCGTTKQITGKQAVYENELVAARDVRTWSRGSITRDSTFRLQVSCSYSASSSALPVNVQVLTLPPPLPETQPGNLTLELKIAKDKRYRSYYTASDYPVVKLLRDPIYVEVSIHQRTDPSLELRLDQCWATPGADALLQPQWPLLVNGCPYTGDNYQTKLIPVWEASDLPFPSHYQRFSISTFSFVDSVAKRALKGPVYLHCSASVCQPAGTPSCVTLCPARRRRSSDIHFQNNTASISSKGPLILLQAIQDSSEKLHKYSRSPVDSQALWVAGLSGILIVGALFMSYLAIRKWR</sequence>
<proteinExistence type="evidence at protein level"/>
<reference key="1">
    <citation type="journal article" date="2001" name="Eur. J. Biochem.">
        <title>Molecular cloning of bovine zona pellucida glycoproteins ZPA and ZPB and analysis for sperm-binding component of the zona.</title>
        <authorList>
            <person name="Yonezawa N."/>
            <person name="Fukui N."/>
            <person name="Kuno M."/>
            <person name="Shinoda M."/>
            <person name="Goko S."/>
            <person name="Mitsui S."/>
            <person name="Nakano M."/>
        </authorList>
    </citation>
    <scope>NUCLEOTIDE SEQUENCE [MRNA]</scope>
    <scope>PROTEIN SEQUENCE OF 326-339; 341-352; 399-406 AND 435-446</scope>
    <source>
        <tissue>Ovary</tissue>
    </source>
</reference>
<accession>Q9BH11</accession>
<dbReference type="EMBL" id="AB042652">
    <property type="protein sequence ID" value="BAB21481.2"/>
    <property type="molecule type" value="mRNA"/>
</dbReference>
<dbReference type="RefSeq" id="NP_776400.1">
    <property type="nucleotide sequence ID" value="NM_173975.2"/>
</dbReference>
<dbReference type="SMR" id="Q9BH11"/>
<dbReference type="FunCoup" id="Q9BH11">
    <property type="interactions" value="81"/>
</dbReference>
<dbReference type="STRING" id="9913.ENSBTAP00000064986"/>
<dbReference type="GlyCosmos" id="Q9BH11">
    <property type="glycosylation" value="7 sites, No reported glycans"/>
</dbReference>
<dbReference type="GlyGen" id="Q9BH11">
    <property type="glycosylation" value="7 sites"/>
</dbReference>
<dbReference type="PaxDb" id="9913-ENSBTAP00000036829"/>
<dbReference type="GeneID" id="280965"/>
<dbReference type="KEGG" id="bta:280965"/>
<dbReference type="CTD" id="57829"/>
<dbReference type="VEuPathDB" id="HostDB:ENSBTAG00000026085"/>
<dbReference type="eggNOG" id="ENOG502QU54">
    <property type="taxonomic scope" value="Eukaryota"/>
</dbReference>
<dbReference type="HOGENOM" id="CLU_034433_0_0_1"/>
<dbReference type="InParanoid" id="Q9BH11"/>
<dbReference type="OrthoDB" id="8919081at2759"/>
<dbReference type="TreeFam" id="TF332794"/>
<dbReference type="Reactome" id="R-BTA-2534343">
    <property type="pathway name" value="Interaction With Cumulus Cells And The Zona Pellucida"/>
</dbReference>
<dbReference type="Proteomes" id="UP000009136">
    <property type="component" value="Chromosome 28"/>
</dbReference>
<dbReference type="Bgee" id="ENSBTAG00000026085">
    <property type="expression patterns" value="Expressed in oocyte and 2 other cell types or tissues"/>
</dbReference>
<dbReference type="GO" id="GO:0062023">
    <property type="term" value="C:collagen-containing extracellular matrix"/>
    <property type="evidence" value="ECO:0000318"/>
    <property type="project" value="GO_Central"/>
</dbReference>
<dbReference type="GO" id="GO:0035805">
    <property type="term" value="C:egg coat"/>
    <property type="evidence" value="ECO:0000250"/>
    <property type="project" value="UniProtKB"/>
</dbReference>
<dbReference type="GO" id="GO:0005576">
    <property type="term" value="C:extracellular region"/>
    <property type="evidence" value="ECO:0007669"/>
    <property type="project" value="UniProtKB-KW"/>
</dbReference>
<dbReference type="GO" id="GO:0005886">
    <property type="term" value="C:plasma membrane"/>
    <property type="evidence" value="ECO:0007669"/>
    <property type="project" value="UniProtKB-SubCell"/>
</dbReference>
<dbReference type="GO" id="GO:0032991">
    <property type="term" value="C:protein-containing complex"/>
    <property type="evidence" value="ECO:0000314"/>
    <property type="project" value="UniProtKB"/>
</dbReference>
<dbReference type="GO" id="GO:0032190">
    <property type="term" value="F:acrosin binding"/>
    <property type="evidence" value="ECO:0000318"/>
    <property type="project" value="GO_Central"/>
</dbReference>
<dbReference type="GO" id="GO:0035804">
    <property type="term" value="F:structural constituent of egg coat"/>
    <property type="evidence" value="ECO:0000250"/>
    <property type="project" value="UniProtKB"/>
</dbReference>
<dbReference type="GO" id="GO:0007339">
    <property type="term" value="P:binding of sperm to zona pellucida"/>
    <property type="evidence" value="ECO:0000353"/>
    <property type="project" value="UniProtKB"/>
</dbReference>
<dbReference type="GO" id="GO:0060468">
    <property type="term" value="P:prevention of polyspermy"/>
    <property type="evidence" value="ECO:0000318"/>
    <property type="project" value="GO_Central"/>
</dbReference>
<dbReference type="CDD" id="cd00111">
    <property type="entry name" value="Trefoil"/>
    <property type="match status" value="1"/>
</dbReference>
<dbReference type="FunFam" id="2.60.40.4100:FF:000004">
    <property type="entry name" value="Zona pellucida sperm-binding protein 2"/>
    <property type="match status" value="1"/>
</dbReference>
<dbReference type="FunFam" id="4.10.110.10:FF:000004">
    <property type="entry name" value="zona pellucida sperm-binding protein 4 isoform X1"/>
    <property type="match status" value="1"/>
</dbReference>
<dbReference type="Gene3D" id="4.10.110.10">
    <property type="entry name" value="Spasmolytic Protein, domain 1"/>
    <property type="match status" value="1"/>
</dbReference>
<dbReference type="Gene3D" id="2.60.40.4100">
    <property type="entry name" value="Zona pellucida, ZP-C domain"/>
    <property type="match status" value="1"/>
</dbReference>
<dbReference type="Gene3D" id="2.60.40.3210">
    <property type="entry name" value="Zona pellucida, ZP-N domain"/>
    <property type="match status" value="1"/>
</dbReference>
<dbReference type="InterPro" id="IPR017957">
    <property type="entry name" value="P_trefoil_CS"/>
</dbReference>
<dbReference type="InterPro" id="IPR000519">
    <property type="entry name" value="P_trefoil_dom"/>
</dbReference>
<dbReference type="InterPro" id="IPR044913">
    <property type="entry name" value="P_trefoil_dom_sf"/>
</dbReference>
<dbReference type="InterPro" id="IPR051148">
    <property type="entry name" value="Zona_Pellucida_Domain_gp"/>
</dbReference>
<dbReference type="InterPro" id="IPR055355">
    <property type="entry name" value="ZP-C"/>
</dbReference>
<dbReference type="InterPro" id="IPR042235">
    <property type="entry name" value="ZP-C_dom"/>
</dbReference>
<dbReference type="InterPro" id="IPR055356">
    <property type="entry name" value="ZP-N"/>
</dbReference>
<dbReference type="InterPro" id="IPR054554">
    <property type="entry name" value="ZP1/4_Ig-like"/>
</dbReference>
<dbReference type="InterPro" id="IPR001507">
    <property type="entry name" value="ZP_dom"/>
</dbReference>
<dbReference type="InterPro" id="IPR017977">
    <property type="entry name" value="ZP_dom_CS"/>
</dbReference>
<dbReference type="PANTHER" id="PTHR23343">
    <property type="entry name" value="ZONA PELLUCIDA SPERM-BINDING PROTEIN"/>
    <property type="match status" value="1"/>
</dbReference>
<dbReference type="PANTHER" id="PTHR23343:SF31">
    <property type="entry name" value="ZONA PELLUCIDA SPERM-BINDING PROTEIN 4"/>
    <property type="match status" value="1"/>
</dbReference>
<dbReference type="Pfam" id="PF00088">
    <property type="entry name" value="Trefoil"/>
    <property type="match status" value="1"/>
</dbReference>
<dbReference type="Pfam" id="PF00100">
    <property type="entry name" value="Zona_pellucida"/>
    <property type="match status" value="1"/>
</dbReference>
<dbReference type="Pfam" id="PF23344">
    <property type="entry name" value="ZP-N"/>
    <property type="match status" value="1"/>
</dbReference>
<dbReference type="Pfam" id="PF22821">
    <property type="entry name" value="ZP1_ZP4_Ig-like"/>
    <property type="match status" value="1"/>
</dbReference>
<dbReference type="SMART" id="SM00018">
    <property type="entry name" value="PD"/>
    <property type="match status" value="1"/>
</dbReference>
<dbReference type="SMART" id="SM00241">
    <property type="entry name" value="ZP"/>
    <property type="match status" value="1"/>
</dbReference>
<dbReference type="SUPFAM" id="SSF57492">
    <property type="entry name" value="Trefoil"/>
    <property type="match status" value="1"/>
</dbReference>
<dbReference type="PROSITE" id="PS00025">
    <property type="entry name" value="P_TREFOIL_1"/>
    <property type="match status" value="1"/>
</dbReference>
<dbReference type="PROSITE" id="PS51448">
    <property type="entry name" value="P_TREFOIL_2"/>
    <property type="match status" value="1"/>
</dbReference>
<dbReference type="PROSITE" id="PS00682">
    <property type="entry name" value="ZP_1"/>
    <property type="match status" value="1"/>
</dbReference>
<dbReference type="PROSITE" id="PS51034">
    <property type="entry name" value="ZP_2"/>
    <property type="match status" value="1"/>
</dbReference>
<feature type="signal peptide" evidence="3">
    <location>
        <begin position="1"/>
        <end position="17"/>
    </location>
</feature>
<feature type="chain" id="PRO_0000041723" description="Zona pellucida sperm-binding protein 4">
    <location>
        <begin position="18"/>
        <end position="461"/>
    </location>
</feature>
<feature type="chain" id="PRO_0000304576" description="Processed zona pellucida sperm-binding protein 4">
    <location>
        <begin position="18"/>
        <end status="unknown"/>
    </location>
</feature>
<feature type="propeptide" id="PRO_0000041724" description="Removed in mature form" evidence="1">
    <location>
        <begin position="462"/>
        <end position="534"/>
    </location>
</feature>
<feature type="topological domain" description="Extracellular" evidence="3">
    <location>
        <begin position="18"/>
        <end position="509"/>
    </location>
</feature>
<feature type="transmembrane region" description="Helical" evidence="3">
    <location>
        <begin position="510"/>
        <end position="530"/>
    </location>
</feature>
<feature type="topological domain" description="Cytoplasmic" evidence="3">
    <location>
        <begin position="531"/>
        <end position="534"/>
    </location>
</feature>
<feature type="domain" description="P-type" evidence="5">
    <location>
        <begin position="141"/>
        <end position="183"/>
    </location>
</feature>
<feature type="domain" description="ZP" evidence="4">
    <location>
        <begin position="188"/>
        <end position="465"/>
    </location>
</feature>
<feature type="glycosylation site" description="N-linked (GlcNAc...) asparagine" evidence="3">
    <location>
        <position position="71"/>
    </location>
</feature>
<feature type="glycosylation site" description="N-linked (GlcNAc...) asparagine" evidence="1">
    <location>
        <position position="202"/>
    </location>
</feature>
<feature type="glycosylation site" description="N-linked (GlcNAc...) asparagine" evidence="1">
    <location>
        <position position="219"/>
    </location>
</feature>
<feature type="glycosylation site" description="O-linked (GalNAc...) serine" evidence="1">
    <location>
        <position position="292"/>
    </location>
</feature>
<feature type="glycosylation site" description="O-linked (GalNAc...) threonine" evidence="1">
    <location>
        <position position="302"/>
    </location>
</feature>
<feature type="glycosylation site" description="N-linked (GlcNAc...) asparagine" evidence="3">
    <location>
        <position position="314"/>
    </location>
</feature>
<feature type="glycosylation site" description="N-linked (GlcNAc...) asparagine" evidence="3">
    <location>
        <position position="472"/>
    </location>
</feature>
<feature type="disulfide bond" evidence="5">
    <location>
        <begin position="367"/>
        <end position="441"/>
    </location>
</feature>
<organism>
    <name type="scientific">Bos taurus</name>
    <name type="common">Bovine</name>
    <dbReference type="NCBI Taxonomy" id="9913"/>
    <lineage>
        <taxon>Eukaryota</taxon>
        <taxon>Metazoa</taxon>
        <taxon>Chordata</taxon>
        <taxon>Craniata</taxon>
        <taxon>Vertebrata</taxon>
        <taxon>Euteleostomi</taxon>
        <taxon>Mammalia</taxon>
        <taxon>Eutheria</taxon>
        <taxon>Laurasiatheria</taxon>
        <taxon>Artiodactyla</taxon>
        <taxon>Ruminantia</taxon>
        <taxon>Pecora</taxon>
        <taxon>Bovidae</taxon>
        <taxon>Bovinae</taxon>
        <taxon>Bos</taxon>
    </lineage>
</organism>
<protein>
    <recommendedName>
        <fullName>Zona pellucida sperm-binding protein 4</fullName>
    </recommendedName>
    <alternativeName>
        <fullName>Zona pellucida glycoprotein 4</fullName>
        <shortName>Zp-4</shortName>
    </alternativeName>
    <alternativeName>
        <fullName>Zona pellucida protein B</fullName>
    </alternativeName>
    <component>
        <recommendedName>
            <fullName>Processed zona pellucida sperm-binding protein 4</fullName>
        </recommendedName>
    </component>
</protein>
<name>ZP4_BOVIN</name>
<gene>
    <name type="primary">ZP4</name>
    <name type="synonym">ZPB</name>
</gene>
<comment type="function">
    <text>Component of the zona pellucida, an extracellular matrix surrounding oocytes which mediates sperm binding, induction of the acrosome reaction and prevents post-fertilization polyspermy. The zona pellucida is composed of 3 to 4 glycoproteins, ZP1, ZP2, ZP3, and ZP4. ZP4 may act as a sperm receptor.</text>
</comment>
<comment type="subcellular location">
    <molecule>Processed zona pellucida sperm-binding protein 4</molecule>
    <subcellularLocation>
        <location evidence="2">Zona pellucida</location>
    </subcellularLocation>
</comment>
<comment type="subcellular location">
    <subcellularLocation>
        <location evidence="2">Cell membrane</location>
        <topology evidence="3">Single-pass type I membrane protein</topology>
    </subcellularLocation>
</comment>
<comment type="tissue specificity">
    <text>Expressed in oocytes.</text>
</comment>
<comment type="domain">
    <text>The ZP domain is involved in the polymerization of the ZP proteins to form the zona pellucida.</text>
</comment>
<comment type="PTM">
    <text>Proteolytically cleaved before the transmembrane segment to yield the secreted ectodomain incorporated in the zona pellucida.</text>
</comment>
<comment type="PTM">
    <text evidence="6">The N-terminus is blocked.</text>
</comment>
<comment type="PTM">
    <text>Contains disulfide bond(s).</text>
</comment>
<comment type="similarity">
    <text evidence="6">Belongs to the ZP domain family. ZPB subfamily.</text>
</comment>
<evidence type="ECO:0000250" key="1"/>
<evidence type="ECO:0000250" key="2">
    <source>
        <dbReference type="UniProtKB" id="Q00193"/>
    </source>
</evidence>
<evidence type="ECO:0000255" key="3"/>
<evidence type="ECO:0000255" key="4">
    <source>
        <dbReference type="PROSITE-ProRule" id="PRU00375"/>
    </source>
</evidence>
<evidence type="ECO:0000255" key="5">
    <source>
        <dbReference type="PROSITE-ProRule" id="PRU00779"/>
    </source>
</evidence>
<evidence type="ECO:0000305" key="6"/>